<name>MRNC_STRR6</name>
<accession>Q8DQS7</accession>
<gene>
    <name evidence="1" type="primary">mrnC</name>
    <name type="ordered locus">spr0520</name>
</gene>
<proteinExistence type="inferred from homology"/>
<dbReference type="EC" id="3.1.26.-" evidence="1"/>
<dbReference type="EMBL" id="AE007317">
    <property type="protein sequence ID" value="AAK99324.1"/>
    <property type="molecule type" value="Genomic_DNA"/>
</dbReference>
<dbReference type="PIR" id="H95068">
    <property type="entry name" value="H95068"/>
</dbReference>
<dbReference type="PIR" id="H97936">
    <property type="entry name" value="H97936"/>
</dbReference>
<dbReference type="RefSeq" id="NP_358114.1">
    <property type="nucleotide sequence ID" value="NC_003098.1"/>
</dbReference>
<dbReference type="RefSeq" id="WP_000567914.1">
    <property type="nucleotide sequence ID" value="NC_003098.1"/>
</dbReference>
<dbReference type="SMR" id="Q8DQS7"/>
<dbReference type="STRING" id="171101.spr0520"/>
<dbReference type="KEGG" id="spr:spr0520"/>
<dbReference type="PATRIC" id="fig|171101.6.peg.572"/>
<dbReference type="eggNOG" id="COG1939">
    <property type="taxonomic scope" value="Bacteria"/>
</dbReference>
<dbReference type="HOGENOM" id="CLU_091169_2_0_9"/>
<dbReference type="Proteomes" id="UP000000586">
    <property type="component" value="Chromosome"/>
</dbReference>
<dbReference type="GO" id="GO:0005737">
    <property type="term" value="C:cytoplasm"/>
    <property type="evidence" value="ECO:0007669"/>
    <property type="project" value="UniProtKB-SubCell"/>
</dbReference>
<dbReference type="GO" id="GO:0004525">
    <property type="term" value="F:ribonuclease III activity"/>
    <property type="evidence" value="ECO:0007669"/>
    <property type="project" value="InterPro"/>
</dbReference>
<dbReference type="GO" id="GO:0019843">
    <property type="term" value="F:rRNA binding"/>
    <property type="evidence" value="ECO:0007669"/>
    <property type="project" value="UniProtKB-UniRule"/>
</dbReference>
<dbReference type="GO" id="GO:0006364">
    <property type="term" value="P:rRNA processing"/>
    <property type="evidence" value="ECO:0007669"/>
    <property type="project" value="UniProtKB-UniRule"/>
</dbReference>
<dbReference type="CDD" id="cd00593">
    <property type="entry name" value="RIBOc"/>
    <property type="match status" value="1"/>
</dbReference>
<dbReference type="Gene3D" id="1.10.1520.10">
    <property type="entry name" value="Ribonuclease III domain"/>
    <property type="match status" value="1"/>
</dbReference>
<dbReference type="HAMAP" id="MF_01468">
    <property type="entry name" value="RNase_Mini_III"/>
    <property type="match status" value="1"/>
</dbReference>
<dbReference type="InterPro" id="IPR008226">
    <property type="entry name" value="Mini3_fam"/>
</dbReference>
<dbReference type="InterPro" id="IPR000999">
    <property type="entry name" value="RNase_III_dom"/>
</dbReference>
<dbReference type="InterPro" id="IPR036389">
    <property type="entry name" value="RNase_III_sf"/>
</dbReference>
<dbReference type="PANTHER" id="PTHR34276">
    <property type="entry name" value="MINI-RIBONUCLEASE 3"/>
    <property type="match status" value="1"/>
</dbReference>
<dbReference type="PANTHER" id="PTHR34276:SF1">
    <property type="entry name" value="MINI-RIBONUCLEASE 3"/>
    <property type="match status" value="1"/>
</dbReference>
<dbReference type="Pfam" id="PF00636">
    <property type="entry name" value="Ribonuclease_3"/>
    <property type="match status" value="1"/>
</dbReference>
<dbReference type="PIRSF" id="PIRSF005520">
    <property type="entry name" value="UCP005520"/>
    <property type="match status" value="1"/>
</dbReference>
<dbReference type="SUPFAM" id="SSF69065">
    <property type="entry name" value="RNase III domain-like"/>
    <property type="match status" value="1"/>
</dbReference>
<sequence>MIDVNLINGIALAFEGDAVYSMYIRRHLILKGMTKPNKLHQEATKYVSAKAQARLIALMLEEQVLTEKEEEIYKRGRNTNSHTKAKNADVVTYRMSTGFEAVMGYLHMTENLERLESLVSWCIQKVEG</sequence>
<organism>
    <name type="scientific">Streptococcus pneumoniae (strain ATCC BAA-255 / R6)</name>
    <dbReference type="NCBI Taxonomy" id="171101"/>
    <lineage>
        <taxon>Bacteria</taxon>
        <taxon>Bacillati</taxon>
        <taxon>Bacillota</taxon>
        <taxon>Bacilli</taxon>
        <taxon>Lactobacillales</taxon>
        <taxon>Streptococcaceae</taxon>
        <taxon>Streptococcus</taxon>
    </lineage>
</organism>
<reference key="1">
    <citation type="journal article" date="2001" name="J. Bacteriol.">
        <title>Genome of the bacterium Streptococcus pneumoniae strain R6.</title>
        <authorList>
            <person name="Hoskins J."/>
            <person name="Alborn W.E. Jr."/>
            <person name="Arnold J."/>
            <person name="Blaszczak L.C."/>
            <person name="Burgett S."/>
            <person name="DeHoff B.S."/>
            <person name="Estrem S.T."/>
            <person name="Fritz L."/>
            <person name="Fu D.-J."/>
            <person name="Fuller W."/>
            <person name="Geringer C."/>
            <person name="Gilmour R."/>
            <person name="Glass J.S."/>
            <person name="Khoja H."/>
            <person name="Kraft A.R."/>
            <person name="Lagace R.E."/>
            <person name="LeBlanc D.J."/>
            <person name="Lee L.N."/>
            <person name="Lefkowitz E.J."/>
            <person name="Lu J."/>
            <person name="Matsushima P."/>
            <person name="McAhren S.M."/>
            <person name="McHenney M."/>
            <person name="McLeaster K."/>
            <person name="Mundy C.W."/>
            <person name="Nicas T.I."/>
            <person name="Norris F.H."/>
            <person name="O'Gara M."/>
            <person name="Peery R.B."/>
            <person name="Robertson G.T."/>
            <person name="Rockey P."/>
            <person name="Sun P.-M."/>
            <person name="Winkler M.E."/>
            <person name="Yang Y."/>
            <person name="Young-Bellido M."/>
            <person name="Zhao G."/>
            <person name="Zook C.A."/>
            <person name="Baltz R.H."/>
            <person name="Jaskunas S.R."/>
            <person name="Rosteck P.R. Jr."/>
            <person name="Skatrud P.L."/>
            <person name="Glass J.I."/>
        </authorList>
    </citation>
    <scope>NUCLEOTIDE SEQUENCE [LARGE SCALE GENOMIC DNA]</scope>
    <source>
        <strain>ATCC BAA-255 / R6</strain>
    </source>
</reference>
<comment type="function">
    <text evidence="1">Involved in correct processing of both the 5' and 3' ends of 23S rRNA precursor. Processes 30S rRNA precursor transcript even in absence of ribonuclease 3 (Rnc); Rnc processes 30S rRNA into smaller rRNA precursors.</text>
</comment>
<comment type="cofactor">
    <cofactor evidence="1">
        <name>Mg(2+)</name>
        <dbReference type="ChEBI" id="CHEBI:18420"/>
    </cofactor>
</comment>
<comment type="subunit">
    <text evidence="1">Homodimer.</text>
</comment>
<comment type="subcellular location">
    <subcellularLocation>
        <location evidence="1">Cytoplasm</location>
    </subcellularLocation>
</comment>
<comment type="similarity">
    <text evidence="1">Belongs to the MrnC RNase family.</text>
</comment>
<evidence type="ECO:0000255" key="1">
    <source>
        <dbReference type="HAMAP-Rule" id="MF_01468"/>
    </source>
</evidence>
<keyword id="KW-0963">Cytoplasm</keyword>
<keyword id="KW-0255">Endonuclease</keyword>
<keyword id="KW-0378">Hydrolase</keyword>
<keyword id="KW-0460">Magnesium</keyword>
<keyword id="KW-0540">Nuclease</keyword>
<keyword id="KW-1185">Reference proteome</keyword>
<keyword id="KW-0690">Ribosome biogenesis</keyword>
<keyword id="KW-0694">RNA-binding</keyword>
<keyword id="KW-0698">rRNA processing</keyword>
<keyword id="KW-0699">rRNA-binding</keyword>
<feature type="chain" id="PRO_0000415992" description="Mini-ribonuclease 3">
    <location>
        <begin position="1"/>
        <end position="128"/>
    </location>
</feature>
<feature type="active site" evidence="1">
    <location>
        <position position="17"/>
    </location>
</feature>
<protein>
    <recommendedName>
        <fullName evidence="1">Mini-ribonuclease 3</fullName>
        <shortName evidence="1">Mini-3</shortName>
        <shortName evidence="1">Mini-RNase 3</shortName>
        <ecNumber evidence="1">3.1.26.-</ecNumber>
    </recommendedName>
    <alternativeName>
        <fullName evidence="1">Mini-RNase III</fullName>
        <shortName evidence="1">Mini-III</shortName>
    </alternativeName>
</protein>